<accession>Q49Y13</accession>
<dbReference type="EC" id="3.1.-.-" evidence="1"/>
<dbReference type="EMBL" id="AP008934">
    <property type="protein sequence ID" value="BAE18331.1"/>
    <property type="molecule type" value="Genomic_DNA"/>
</dbReference>
<dbReference type="RefSeq" id="WP_011302999.1">
    <property type="nucleotide sequence ID" value="NZ_MTGA01000038.1"/>
</dbReference>
<dbReference type="SMR" id="Q49Y13"/>
<dbReference type="GeneID" id="66867415"/>
<dbReference type="KEGG" id="ssp:SSP1186"/>
<dbReference type="eggNOG" id="COG0319">
    <property type="taxonomic scope" value="Bacteria"/>
</dbReference>
<dbReference type="HOGENOM" id="CLU_106710_3_0_9"/>
<dbReference type="OrthoDB" id="9807740at2"/>
<dbReference type="Proteomes" id="UP000006371">
    <property type="component" value="Chromosome"/>
</dbReference>
<dbReference type="GO" id="GO:0005737">
    <property type="term" value="C:cytoplasm"/>
    <property type="evidence" value="ECO:0007669"/>
    <property type="project" value="UniProtKB-SubCell"/>
</dbReference>
<dbReference type="GO" id="GO:0004222">
    <property type="term" value="F:metalloendopeptidase activity"/>
    <property type="evidence" value="ECO:0007669"/>
    <property type="project" value="InterPro"/>
</dbReference>
<dbReference type="GO" id="GO:0004521">
    <property type="term" value="F:RNA endonuclease activity"/>
    <property type="evidence" value="ECO:0007669"/>
    <property type="project" value="UniProtKB-UniRule"/>
</dbReference>
<dbReference type="GO" id="GO:0008270">
    <property type="term" value="F:zinc ion binding"/>
    <property type="evidence" value="ECO:0007669"/>
    <property type="project" value="UniProtKB-UniRule"/>
</dbReference>
<dbReference type="GO" id="GO:0006364">
    <property type="term" value="P:rRNA processing"/>
    <property type="evidence" value="ECO:0007669"/>
    <property type="project" value="UniProtKB-UniRule"/>
</dbReference>
<dbReference type="Gene3D" id="3.40.390.30">
    <property type="entry name" value="Metalloproteases ('zincins'), catalytic domain"/>
    <property type="match status" value="1"/>
</dbReference>
<dbReference type="HAMAP" id="MF_00009">
    <property type="entry name" value="Endoribonucl_YbeY"/>
    <property type="match status" value="1"/>
</dbReference>
<dbReference type="InterPro" id="IPR023091">
    <property type="entry name" value="MetalPrtase_cat_dom_sf_prd"/>
</dbReference>
<dbReference type="InterPro" id="IPR002036">
    <property type="entry name" value="YbeY"/>
</dbReference>
<dbReference type="InterPro" id="IPR020549">
    <property type="entry name" value="YbeY_CS"/>
</dbReference>
<dbReference type="NCBIfam" id="TIGR00043">
    <property type="entry name" value="rRNA maturation RNase YbeY"/>
    <property type="match status" value="1"/>
</dbReference>
<dbReference type="PANTHER" id="PTHR46986">
    <property type="entry name" value="ENDORIBONUCLEASE YBEY, CHLOROPLASTIC"/>
    <property type="match status" value="1"/>
</dbReference>
<dbReference type="PANTHER" id="PTHR46986:SF1">
    <property type="entry name" value="ENDORIBONUCLEASE YBEY, CHLOROPLASTIC"/>
    <property type="match status" value="1"/>
</dbReference>
<dbReference type="Pfam" id="PF02130">
    <property type="entry name" value="YbeY"/>
    <property type="match status" value="1"/>
</dbReference>
<dbReference type="SUPFAM" id="SSF55486">
    <property type="entry name" value="Metalloproteases ('zincins'), catalytic domain"/>
    <property type="match status" value="1"/>
</dbReference>
<dbReference type="PROSITE" id="PS01306">
    <property type="entry name" value="UPF0054"/>
    <property type="match status" value="1"/>
</dbReference>
<keyword id="KW-0963">Cytoplasm</keyword>
<keyword id="KW-0255">Endonuclease</keyword>
<keyword id="KW-0378">Hydrolase</keyword>
<keyword id="KW-0479">Metal-binding</keyword>
<keyword id="KW-0540">Nuclease</keyword>
<keyword id="KW-1185">Reference proteome</keyword>
<keyword id="KW-0690">Ribosome biogenesis</keyword>
<keyword id="KW-0698">rRNA processing</keyword>
<keyword id="KW-0862">Zinc</keyword>
<comment type="function">
    <text evidence="1">Single strand-specific metallo-endoribonuclease involved in late-stage 70S ribosome quality control and in maturation of the 3' terminus of the 16S rRNA.</text>
</comment>
<comment type="cofactor">
    <cofactor evidence="1">
        <name>Zn(2+)</name>
        <dbReference type="ChEBI" id="CHEBI:29105"/>
    </cofactor>
    <text evidence="1">Binds 1 zinc ion.</text>
</comment>
<comment type="subcellular location">
    <subcellularLocation>
        <location evidence="1">Cytoplasm</location>
    </subcellularLocation>
</comment>
<comment type="similarity">
    <text evidence="1">Belongs to the endoribonuclease YbeY family.</text>
</comment>
<name>YBEY_STAS1</name>
<reference key="1">
    <citation type="journal article" date="2005" name="Proc. Natl. Acad. Sci. U.S.A.">
        <title>Whole genome sequence of Staphylococcus saprophyticus reveals the pathogenesis of uncomplicated urinary tract infection.</title>
        <authorList>
            <person name="Kuroda M."/>
            <person name="Yamashita A."/>
            <person name="Hirakawa H."/>
            <person name="Kumano M."/>
            <person name="Morikawa K."/>
            <person name="Higashide M."/>
            <person name="Maruyama A."/>
            <person name="Inose Y."/>
            <person name="Matoba K."/>
            <person name="Toh H."/>
            <person name="Kuhara S."/>
            <person name="Hattori M."/>
            <person name="Ohta T."/>
        </authorList>
    </citation>
    <scope>NUCLEOTIDE SEQUENCE [LARGE SCALE GENOMIC DNA]</scope>
    <source>
        <strain>ATCC 15305 / DSM 20229 / NCIMB 8711 / NCTC 7292 / S-41</strain>
    </source>
</reference>
<feature type="chain" id="PRO_0000284323" description="Endoribonuclease YbeY">
    <location>
        <begin position="1"/>
        <end position="153"/>
    </location>
</feature>
<feature type="binding site" evidence="1">
    <location>
        <position position="118"/>
    </location>
    <ligand>
        <name>Zn(2+)</name>
        <dbReference type="ChEBI" id="CHEBI:29105"/>
        <note>catalytic</note>
    </ligand>
</feature>
<feature type="binding site" evidence="1">
    <location>
        <position position="122"/>
    </location>
    <ligand>
        <name>Zn(2+)</name>
        <dbReference type="ChEBI" id="CHEBI:29105"/>
        <note>catalytic</note>
    </ligand>
</feature>
<feature type="binding site" evidence="1">
    <location>
        <position position="128"/>
    </location>
    <ligand>
        <name>Zn(2+)</name>
        <dbReference type="ChEBI" id="CHEBI:29105"/>
        <note>catalytic</note>
    </ligand>
</feature>
<proteinExistence type="inferred from homology"/>
<evidence type="ECO:0000255" key="1">
    <source>
        <dbReference type="HAMAP-Rule" id="MF_00009"/>
    </source>
</evidence>
<protein>
    <recommendedName>
        <fullName evidence="1">Endoribonuclease YbeY</fullName>
        <ecNumber evidence="1">3.1.-.-</ecNumber>
    </recommendedName>
</protein>
<gene>
    <name evidence="1" type="primary">ybeY</name>
    <name type="ordered locus">SSP1186</name>
</gene>
<organism>
    <name type="scientific">Staphylococcus saprophyticus subsp. saprophyticus (strain ATCC 15305 / DSM 20229 / NCIMB 8711 / NCTC 7292 / S-41)</name>
    <dbReference type="NCBI Taxonomy" id="342451"/>
    <lineage>
        <taxon>Bacteria</taxon>
        <taxon>Bacillati</taxon>
        <taxon>Bacillota</taxon>
        <taxon>Bacilli</taxon>
        <taxon>Bacillales</taxon>
        <taxon>Staphylococcaceae</taxon>
        <taxon>Staphylococcus</taxon>
    </lineage>
</organism>
<sequence>MFTIDFSDHTNLVKEDWFTQIDKLLTFAKEQENIEEEAELSVTFVDKDEIQEINKMYRDKDKVTDVISFALEEDEPEITGIEMPRVLGDIIICTDVAQEQADSYGHSFERELGFLALHGFLHLLGYDHMNEQDEKQMFGRQDQILNAYGLTRD</sequence>